<comment type="function">
    <text evidence="1">Catalyzes the interconversion between ADP-D-glycero-beta-D-manno-heptose and ADP-L-glycero-beta-D-manno-heptose via an epimerization at carbon 6 of the heptose.</text>
</comment>
<comment type="catalytic activity">
    <reaction evidence="1">
        <text>ADP-D-glycero-beta-D-manno-heptose = ADP-L-glycero-beta-D-manno-heptose</text>
        <dbReference type="Rhea" id="RHEA:17577"/>
        <dbReference type="ChEBI" id="CHEBI:59967"/>
        <dbReference type="ChEBI" id="CHEBI:61506"/>
        <dbReference type="EC" id="5.1.3.20"/>
    </reaction>
</comment>
<comment type="cofactor">
    <cofactor evidence="1">
        <name>NADP(+)</name>
        <dbReference type="ChEBI" id="CHEBI:58349"/>
    </cofactor>
    <text evidence="1">Binds 1 NADP(+) per subunit.</text>
</comment>
<comment type="pathway">
    <text evidence="1">Nucleotide-sugar biosynthesis; ADP-L-glycero-beta-D-manno-heptose biosynthesis; ADP-L-glycero-beta-D-manno-heptose from D-glycero-beta-D-manno-heptose 7-phosphate: step 4/4.</text>
</comment>
<comment type="subunit">
    <text evidence="1">Homopentamer.</text>
</comment>
<comment type="domain">
    <text evidence="1">Contains a large N-terminal NADP-binding domain, and a smaller C-terminal substrate-binding domain.</text>
</comment>
<comment type="similarity">
    <text evidence="1">Belongs to the NAD(P)-dependent epimerase/dehydratase family. HldD subfamily.</text>
</comment>
<keyword id="KW-0119">Carbohydrate metabolism</keyword>
<keyword id="KW-0413">Isomerase</keyword>
<keyword id="KW-0521">NADP</keyword>
<feature type="chain" id="PRO_1000148091" description="ADP-L-glycero-D-manno-heptose-6-epimerase">
    <location>
        <begin position="1"/>
        <end position="310"/>
    </location>
</feature>
<feature type="active site" description="Proton acceptor" evidence="1">
    <location>
        <position position="140"/>
    </location>
</feature>
<feature type="active site" description="Proton acceptor" evidence="1">
    <location>
        <position position="178"/>
    </location>
</feature>
<feature type="binding site" evidence="1">
    <location>
        <begin position="10"/>
        <end position="11"/>
    </location>
    <ligand>
        <name>NADP(+)</name>
        <dbReference type="ChEBI" id="CHEBI:58349"/>
    </ligand>
</feature>
<feature type="binding site" evidence="1">
    <location>
        <begin position="31"/>
        <end position="32"/>
    </location>
    <ligand>
        <name>NADP(+)</name>
        <dbReference type="ChEBI" id="CHEBI:58349"/>
    </ligand>
</feature>
<feature type="binding site" evidence="1">
    <location>
        <position position="38"/>
    </location>
    <ligand>
        <name>NADP(+)</name>
        <dbReference type="ChEBI" id="CHEBI:58349"/>
    </ligand>
</feature>
<feature type="binding site" evidence="1">
    <location>
        <position position="53"/>
    </location>
    <ligand>
        <name>NADP(+)</name>
        <dbReference type="ChEBI" id="CHEBI:58349"/>
    </ligand>
</feature>
<feature type="binding site" evidence="1">
    <location>
        <begin position="75"/>
        <end position="79"/>
    </location>
    <ligand>
        <name>NADP(+)</name>
        <dbReference type="ChEBI" id="CHEBI:58349"/>
    </ligand>
</feature>
<feature type="binding site" evidence="1">
    <location>
        <position position="92"/>
    </location>
    <ligand>
        <name>NADP(+)</name>
        <dbReference type="ChEBI" id="CHEBI:58349"/>
    </ligand>
</feature>
<feature type="binding site" evidence="1">
    <location>
        <position position="144"/>
    </location>
    <ligand>
        <name>NADP(+)</name>
        <dbReference type="ChEBI" id="CHEBI:58349"/>
    </ligand>
</feature>
<feature type="binding site" evidence="1">
    <location>
        <position position="169"/>
    </location>
    <ligand>
        <name>substrate</name>
    </ligand>
</feature>
<feature type="binding site" evidence="1">
    <location>
        <position position="170"/>
    </location>
    <ligand>
        <name>NADP(+)</name>
        <dbReference type="ChEBI" id="CHEBI:58349"/>
    </ligand>
</feature>
<feature type="binding site" evidence="1">
    <location>
        <position position="178"/>
    </location>
    <ligand>
        <name>NADP(+)</name>
        <dbReference type="ChEBI" id="CHEBI:58349"/>
    </ligand>
</feature>
<feature type="binding site" evidence="1">
    <location>
        <position position="180"/>
    </location>
    <ligand>
        <name>substrate</name>
    </ligand>
</feature>
<feature type="binding site" evidence="1">
    <location>
        <position position="187"/>
    </location>
    <ligand>
        <name>substrate</name>
    </ligand>
</feature>
<feature type="binding site" evidence="1">
    <location>
        <begin position="201"/>
        <end position="204"/>
    </location>
    <ligand>
        <name>substrate</name>
    </ligand>
</feature>
<feature type="binding site" evidence="1">
    <location>
        <position position="209"/>
    </location>
    <ligand>
        <name>substrate</name>
    </ligand>
</feature>
<feature type="binding site" evidence="1">
    <location>
        <position position="272"/>
    </location>
    <ligand>
        <name>substrate</name>
    </ligand>
</feature>
<proteinExistence type="inferred from homology"/>
<dbReference type="EC" id="5.1.3.20" evidence="1"/>
<dbReference type="EMBL" id="CP001120">
    <property type="protein sequence ID" value="ACF70022.1"/>
    <property type="molecule type" value="Genomic_DNA"/>
</dbReference>
<dbReference type="SMR" id="B4T9A3"/>
<dbReference type="KEGG" id="seh:SeHA_C4035"/>
<dbReference type="HOGENOM" id="CLU_007383_1_3_6"/>
<dbReference type="UniPathway" id="UPA00356">
    <property type="reaction ID" value="UER00440"/>
</dbReference>
<dbReference type="Proteomes" id="UP000001866">
    <property type="component" value="Chromosome"/>
</dbReference>
<dbReference type="GO" id="GO:0008712">
    <property type="term" value="F:ADP-glyceromanno-heptose 6-epimerase activity"/>
    <property type="evidence" value="ECO:0007669"/>
    <property type="project" value="UniProtKB-UniRule"/>
</dbReference>
<dbReference type="GO" id="GO:0050661">
    <property type="term" value="F:NADP binding"/>
    <property type="evidence" value="ECO:0007669"/>
    <property type="project" value="InterPro"/>
</dbReference>
<dbReference type="GO" id="GO:0097171">
    <property type="term" value="P:ADP-L-glycero-beta-D-manno-heptose biosynthetic process"/>
    <property type="evidence" value="ECO:0007669"/>
    <property type="project" value="UniProtKB-UniPathway"/>
</dbReference>
<dbReference type="GO" id="GO:0005975">
    <property type="term" value="P:carbohydrate metabolic process"/>
    <property type="evidence" value="ECO:0007669"/>
    <property type="project" value="UniProtKB-UniRule"/>
</dbReference>
<dbReference type="CDD" id="cd05248">
    <property type="entry name" value="ADP_GME_SDR_e"/>
    <property type="match status" value="1"/>
</dbReference>
<dbReference type="Gene3D" id="3.40.50.720">
    <property type="entry name" value="NAD(P)-binding Rossmann-like Domain"/>
    <property type="match status" value="1"/>
</dbReference>
<dbReference type="Gene3D" id="3.90.25.10">
    <property type="entry name" value="UDP-galactose 4-epimerase, domain 1"/>
    <property type="match status" value="1"/>
</dbReference>
<dbReference type="HAMAP" id="MF_01601">
    <property type="entry name" value="Heptose_epimerase"/>
    <property type="match status" value="1"/>
</dbReference>
<dbReference type="InterPro" id="IPR001509">
    <property type="entry name" value="Epimerase_deHydtase"/>
</dbReference>
<dbReference type="InterPro" id="IPR011912">
    <property type="entry name" value="Heptose_epim"/>
</dbReference>
<dbReference type="InterPro" id="IPR036291">
    <property type="entry name" value="NAD(P)-bd_dom_sf"/>
</dbReference>
<dbReference type="NCBIfam" id="TIGR02197">
    <property type="entry name" value="heptose_epim"/>
    <property type="match status" value="1"/>
</dbReference>
<dbReference type="NCBIfam" id="NF008360">
    <property type="entry name" value="PRK11150.1"/>
    <property type="match status" value="1"/>
</dbReference>
<dbReference type="PANTHER" id="PTHR43103:SF3">
    <property type="entry name" value="ADP-L-GLYCERO-D-MANNO-HEPTOSE-6-EPIMERASE"/>
    <property type="match status" value="1"/>
</dbReference>
<dbReference type="PANTHER" id="PTHR43103">
    <property type="entry name" value="NUCLEOSIDE-DIPHOSPHATE-SUGAR EPIMERASE"/>
    <property type="match status" value="1"/>
</dbReference>
<dbReference type="Pfam" id="PF01370">
    <property type="entry name" value="Epimerase"/>
    <property type="match status" value="1"/>
</dbReference>
<dbReference type="SUPFAM" id="SSF51735">
    <property type="entry name" value="NAD(P)-binding Rossmann-fold domains"/>
    <property type="match status" value="1"/>
</dbReference>
<name>HLDD_SALHS</name>
<gene>
    <name evidence="1" type="primary">hldD</name>
    <name type="ordered locus">SeHA_C4035</name>
</gene>
<reference key="1">
    <citation type="journal article" date="2011" name="J. Bacteriol.">
        <title>Comparative genomics of 28 Salmonella enterica isolates: evidence for CRISPR-mediated adaptive sublineage evolution.</title>
        <authorList>
            <person name="Fricke W.F."/>
            <person name="Mammel M.K."/>
            <person name="McDermott P.F."/>
            <person name="Tartera C."/>
            <person name="White D.G."/>
            <person name="Leclerc J.E."/>
            <person name="Ravel J."/>
            <person name="Cebula T.A."/>
        </authorList>
    </citation>
    <scope>NUCLEOTIDE SEQUENCE [LARGE SCALE GENOMIC DNA]</scope>
    <source>
        <strain>SL476</strain>
    </source>
</reference>
<protein>
    <recommendedName>
        <fullName evidence="1">ADP-L-glycero-D-manno-heptose-6-epimerase</fullName>
        <ecNumber evidence="1">5.1.3.20</ecNumber>
    </recommendedName>
    <alternativeName>
        <fullName evidence="1">ADP-L-glycero-beta-D-manno-heptose-6-epimerase</fullName>
        <shortName evidence="1">ADP-glyceromanno-heptose 6-epimerase</shortName>
        <shortName evidence="1">ADP-hep 6-epimerase</shortName>
        <shortName evidence="1">AGME</shortName>
    </alternativeName>
</protein>
<accession>B4T9A3</accession>
<evidence type="ECO:0000255" key="1">
    <source>
        <dbReference type="HAMAP-Rule" id="MF_01601"/>
    </source>
</evidence>
<sequence>MIIVTGGAGFIGSNIVKALNDKGITDILVVDNLKDGTKFVNLVDLNIADYMDKEDFLIQIMSGEELGDIEAIFHEGACSSTTEWDGKYMMDNNYQYSKELLHYCLEREIPFLYASSAATYGGRTSDFIESREYEKPLNVYGYSKFLFDEYVRQILPEANSQIVGFRYFNVYGPREGHKGSMASVAFHLNTQLNNGESPKLFEGSENFKRDFVYVGDVAAVNLWFLESGKSGIFNLGTGRAESFQAVADATLAYHKKGSIEYIPFPDKLKGRYQAFTQADLTNLRNAGYDKPFKTVAEGVTEYMAWLNRDA</sequence>
<organism>
    <name type="scientific">Salmonella heidelberg (strain SL476)</name>
    <dbReference type="NCBI Taxonomy" id="454169"/>
    <lineage>
        <taxon>Bacteria</taxon>
        <taxon>Pseudomonadati</taxon>
        <taxon>Pseudomonadota</taxon>
        <taxon>Gammaproteobacteria</taxon>
        <taxon>Enterobacterales</taxon>
        <taxon>Enterobacteriaceae</taxon>
        <taxon>Salmonella</taxon>
    </lineage>
</organism>